<reference key="1">
    <citation type="submission" date="2006-12" db="EMBL/GenBank/DDBJ databases">
        <title>Complete sequence of Acidovorax avenae subsp. citrulli AAC00-1.</title>
        <authorList>
            <person name="Copeland A."/>
            <person name="Lucas S."/>
            <person name="Lapidus A."/>
            <person name="Barry K."/>
            <person name="Detter J.C."/>
            <person name="Glavina del Rio T."/>
            <person name="Dalin E."/>
            <person name="Tice H."/>
            <person name="Pitluck S."/>
            <person name="Kiss H."/>
            <person name="Brettin T."/>
            <person name="Bruce D."/>
            <person name="Han C."/>
            <person name="Tapia R."/>
            <person name="Gilna P."/>
            <person name="Schmutz J."/>
            <person name="Larimer F."/>
            <person name="Land M."/>
            <person name="Hauser L."/>
            <person name="Kyrpides N."/>
            <person name="Kim E."/>
            <person name="Stahl D."/>
            <person name="Richardson P."/>
        </authorList>
    </citation>
    <scope>NUCLEOTIDE SEQUENCE [LARGE SCALE GENOMIC DNA]</scope>
    <source>
        <strain>AAC00-1</strain>
    </source>
</reference>
<name>LEU1_PARC0</name>
<dbReference type="EC" id="2.3.3.13" evidence="1"/>
<dbReference type="EMBL" id="CP000512">
    <property type="protein sequence ID" value="ABM33672.1"/>
    <property type="molecule type" value="Genomic_DNA"/>
</dbReference>
<dbReference type="RefSeq" id="WP_011796182.1">
    <property type="nucleotide sequence ID" value="NC_008752.1"/>
</dbReference>
<dbReference type="SMR" id="A1TRT4"/>
<dbReference type="STRING" id="397945.Aave_3108"/>
<dbReference type="GeneID" id="79792795"/>
<dbReference type="KEGG" id="aav:Aave_3108"/>
<dbReference type="eggNOG" id="COG0119">
    <property type="taxonomic scope" value="Bacteria"/>
</dbReference>
<dbReference type="HOGENOM" id="CLU_022158_0_1_4"/>
<dbReference type="OrthoDB" id="9803573at2"/>
<dbReference type="UniPathway" id="UPA00048">
    <property type="reaction ID" value="UER00070"/>
</dbReference>
<dbReference type="Proteomes" id="UP000002596">
    <property type="component" value="Chromosome"/>
</dbReference>
<dbReference type="GO" id="GO:0005829">
    <property type="term" value="C:cytosol"/>
    <property type="evidence" value="ECO:0007669"/>
    <property type="project" value="TreeGrafter"/>
</dbReference>
<dbReference type="GO" id="GO:0003852">
    <property type="term" value="F:2-isopropylmalate synthase activity"/>
    <property type="evidence" value="ECO:0007669"/>
    <property type="project" value="UniProtKB-UniRule"/>
</dbReference>
<dbReference type="GO" id="GO:0003985">
    <property type="term" value="F:acetyl-CoA C-acetyltransferase activity"/>
    <property type="evidence" value="ECO:0007669"/>
    <property type="project" value="UniProtKB-UniRule"/>
</dbReference>
<dbReference type="GO" id="GO:0030145">
    <property type="term" value="F:manganese ion binding"/>
    <property type="evidence" value="ECO:0007669"/>
    <property type="project" value="UniProtKB-UniRule"/>
</dbReference>
<dbReference type="GO" id="GO:0009098">
    <property type="term" value="P:L-leucine biosynthetic process"/>
    <property type="evidence" value="ECO:0007669"/>
    <property type="project" value="UniProtKB-UniRule"/>
</dbReference>
<dbReference type="CDD" id="cd07940">
    <property type="entry name" value="DRE_TIM_IPMS"/>
    <property type="match status" value="1"/>
</dbReference>
<dbReference type="FunFam" id="1.10.238.260:FF:000001">
    <property type="entry name" value="2-isopropylmalate synthase"/>
    <property type="match status" value="1"/>
</dbReference>
<dbReference type="FunFam" id="3.20.20.70:FF:000010">
    <property type="entry name" value="2-isopropylmalate synthase"/>
    <property type="match status" value="1"/>
</dbReference>
<dbReference type="FunFam" id="3.30.160.270:FF:000003">
    <property type="entry name" value="2-isopropylmalate synthase"/>
    <property type="match status" value="1"/>
</dbReference>
<dbReference type="Gene3D" id="1.10.238.260">
    <property type="match status" value="1"/>
</dbReference>
<dbReference type="Gene3D" id="3.30.160.270">
    <property type="match status" value="1"/>
</dbReference>
<dbReference type="Gene3D" id="3.20.20.70">
    <property type="entry name" value="Aldolase class I"/>
    <property type="match status" value="1"/>
</dbReference>
<dbReference type="HAMAP" id="MF_01025">
    <property type="entry name" value="LeuA_type1"/>
    <property type="match status" value="1"/>
</dbReference>
<dbReference type="InterPro" id="IPR050073">
    <property type="entry name" value="2-IPM_HCS-like"/>
</dbReference>
<dbReference type="InterPro" id="IPR013709">
    <property type="entry name" value="2-isopropylmalate_synth_dimer"/>
</dbReference>
<dbReference type="InterPro" id="IPR002034">
    <property type="entry name" value="AIPM/Hcit_synth_CS"/>
</dbReference>
<dbReference type="InterPro" id="IPR013785">
    <property type="entry name" value="Aldolase_TIM"/>
</dbReference>
<dbReference type="InterPro" id="IPR054691">
    <property type="entry name" value="LeuA/HCS_post-cat"/>
</dbReference>
<dbReference type="InterPro" id="IPR036230">
    <property type="entry name" value="LeuA_allosteric_dom_sf"/>
</dbReference>
<dbReference type="InterPro" id="IPR005671">
    <property type="entry name" value="LeuA_bact_synth"/>
</dbReference>
<dbReference type="InterPro" id="IPR000891">
    <property type="entry name" value="PYR_CT"/>
</dbReference>
<dbReference type="NCBIfam" id="TIGR00973">
    <property type="entry name" value="leuA_bact"/>
    <property type="match status" value="1"/>
</dbReference>
<dbReference type="NCBIfam" id="NF002086">
    <property type="entry name" value="PRK00915.1-3"/>
    <property type="match status" value="1"/>
</dbReference>
<dbReference type="NCBIfam" id="NF002087">
    <property type="entry name" value="PRK00915.1-4"/>
    <property type="match status" value="1"/>
</dbReference>
<dbReference type="PANTHER" id="PTHR10277:SF9">
    <property type="entry name" value="2-ISOPROPYLMALATE SYNTHASE 1, CHLOROPLASTIC-RELATED"/>
    <property type="match status" value="1"/>
</dbReference>
<dbReference type="PANTHER" id="PTHR10277">
    <property type="entry name" value="HOMOCITRATE SYNTHASE-RELATED"/>
    <property type="match status" value="1"/>
</dbReference>
<dbReference type="Pfam" id="PF22617">
    <property type="entry name" value="HCS_D2"/>
    <property type="match status" value="1"/>
</dbReference>
<dbReference type="Pfam" id="PF00682">
    <property type="entry name" value="HMGL-like"/>
    <property type="match status" value="1"/>
</dbReference>
<dbReference type="Pfam" id="PF08502">
    <property type="entry name" value="LeuA_dimer"/>
    <property type="match status" value="1"/>
</dbReference>
<dbReference type="SMART" id="SM00917">
    <property type="entry name" value="LeuA_dimer"/>
    <property type="match status" value="1"/>
</dbReference>
<dbReference type="SUPFAM" id="SSF110921">
    <property type="entry name" value="2-isopropylmalate synthase LeuA, allosteric (dimerisation) domain"/>
    <property type="match status" value="1"/>
</dbReference>
<dbReference type="SUPFAM" id="SSF51569">
    <property type="entry name" value="Aldolase"/>
    <property type="match status" value="1"/>
</dbReference>
<dbReference type="PROSITE" id="PS00815">
    <property type="entry name" value="AIPM_HOMOCIT_SYNTH_1"/>
    <property type="match status" value="1"/>
</dbReference>
<dbReference type="PROSITE" id="PS00816">
    <property type="entry name" value="AIPM_HOMOCIT_SYNTH_2"/>
    <property type="match status" value="1"/>
</dbReference>
<dbReference type="PROSITE" id="PS50991">
    <property type="entry name" value="PYR_CT"/>
    <property type="match status" value="1"/>
</dbReference>
<comment type="function">
    <text evidence="1">Catalyzes the condensation of the acetyl group of acetyl-CoA with 3-methyl-2-oxobutanoate (2-ketoisovalerate) to form 3-carboxy-3-hydroxy-4-methylpentanoate (2-isopropylmalate).</text>
</comment>
<comment type="catalytic activity">
    <reaction evidence="1">
        <text>3-methyl-2-oxobutanoate + acetyl-CoA + H2O = (2S)-2-isopropylmalate + CoA + H(+)</text>
        <dbReference type="Rhea" id="RHEA:21524"/>
        <dbReference type="ChEBI" id="CHEBI:1178"/>
        <dbReference type="ChEBI" id="CHEBI:11851"/>
        <dbReference type="ChEBI" id="CHEBI:15377"/>
        <dbReference type="ChEBI" id="CHEBI:15378"/>
        <dbReference type="ChEBI" id="CHEBI:57287"/>
        <dbReference type="ChEBI" id="CHEBI:57288"/>
        <dbReference type="EC" id="2.3.3.13"/>
    </reaction>
</comment>
<comment type="cofactor">
    <cofactor evidence="1">
        <name>Mn(2+)</name>
        <dbReference type="ChEBI" id="CHEBI:29035"/>
    </cofactor>
</comment>
<comment type="pathway">
    <text evidence="1">Amino-acid biosynthesis; L-leucine biosynthesis; L-leucine from 3-methyl-2-oxobutanoate: step 1/4.</text>
</comment>
<comment type="subunit">
    <text evidence="1">Homodimer.</text>
</comment>
<comment type="subcellular location">
    <subcellularLocation>
        <location evidence="1">Cytoplasm</location>
    </subcellularLocation>
</comment>
<comment type="similarity">
    <text evidence="1">Belongs to the alpha-IPM synthase/homocitrate synthase family. LeuA type 1 subfamily.</text>
</comment>
<sequence>MSDKLIIFDTTLRDGEQSPGASMTRDEKLRIARQLERLRVDVIEAGFAASSNGDFEAVQAIAQAIKDSTVCSLSRANDRDIARAAEALKDAQRARIHTFIATSPLHMEKKLRMTPEQVLEQAKQSVRFARNLVADIEFSPEDGYRSEPDFLCRVLEAVIAEGATTINVPDTVGYAIPELYGNFIRNLRERIPNSDKAVWSVHCHNDLGMAVANSLAGVKIGGARQVECTINGLGERAGNCSLEEIVMAVKTRRDYFGLELGIDTQHIVAASRMVSQTTGFVVQPNKAVVGANAFAHASGIHQDGVLKARDTYEIMRAEDVGWTANKIVLGKLSGRNAFKQRLQDLGVQLESEADVNAAFLRFKELADRKSEIFDEDILALVSGDATAGAGERYGFVSLSQRSETGERPHAAVVFTVDGKEVHGASEGNGPVDASLKAIESHVHSGAEMVLYSVNAISGSTESQGEVTVRLQDSGRVVNGVGADPDIVVASAKAYLSALNKLQSKAERVAAQG</sequence>
<proteinExistence type="inferred from homology"/>
<feature type="chain" id="PRO_1000149116" description="2-isopropylmalate synthase">
    <location>
        <begin position="1"/>
        <end position="512"/>
    </location>
</feature>
<feature type="domain" description="Pyruvate carboxyltransferase" evidence="1">
    <location>
        <begin position="5"/>
        <end position="268"/>
    </location>
</feature>
<feature type="region of interest" description="Regulatory domain" evidence="1">
    <location>
        <begin position="394"/>
        <end position="512"/>
    </location>
</feature>
<feature type="binding site" evidence="1">
    <location>
        <position position="14"/>
    </location>
    <ligand>
        <name>Mn(2+)</name>
        <dbReference type="ChEBI" id="CHEBI:29035"/>
    </ligand>
</feature>
<feature type="binding site" evidence="1">
    <location>
        <position position="202"/>
    </location>
    <ligand>
        <name>Mn(2+)</name>
        <dbReference type="ChEBI" id="CHEBI:29035"/>
    </ligand>
</feature>
<feature type="binding site" evidence="1">
    <location>
        <position position="204"/>
    </location>
    <ligand>
        <name>Mn(2+)</name>
        <dbReference type="ChEBI" id="CHEBI:29035"/>
    </ligand>
</feature>
<feature type="binding site" evidence="1">
    <location>
        <position position="239"/>
    </location>
    <ligand>
        <name>Mn(2+)</name>
        <dbReference type="ChEBI" id="CHEBI:29035"/>
    </ligand>
</feature>
<organism>
    <name type="scientific">Paracidovorax citrulli (strain AAC00-1)</name>
    <name type="common">Acidovorax citrulli</name>
    <dbReference type="NCBI Taxonomy" id="397945"/>
    <lineage>
        <taxon>Bacteria</taxon>
        <taxon>Pseudomonadati</taxon>
        <taxon>Pseudomonadota</taxon>
        <taxon>Betaproteobacteria</taxon>
        <taxon>Burkholderiales</taxon>
        <taxon>Comamonadaceae</taxon>
        <taxon>Paracidovorax</taxon>
    </lineage>
</organism>
<evidence type="ECO:0000255" key="1">
    <source>
        <dbReference type="HAMAP-Rule" id="MF_01025"/>
    </source>
</evidence>
<keyword id="KW-0028">Amino-acid biosynthesis</keyword>
<keyword id="KW-0100">Branched-chain amino acid biosynthesis</keyword>
<keyword id="KW-0963">Cytoplasm</keyword>
<keyword id="KW-0432">Leucine biosynthesis</keyword>
<keyword id="KW-0464">Manganese</keyword>
<keyword id="KW-0479">Metal-binding</keyword>
<keyword id="KW-0808">Transferase</keyword>
<accession>A1TRT4</accession>
<gene>
    <name evidence="1" type="primary">leuA</name>
    <name type="ordered locus">Aave_3108</name>
</gene>
<protein>
    <recommendedName>
        <fullName evidence="1">2-isopropylmalate synthase</fullName>
        <ecNumber evidence="1">2.3.3.13</ecNumber>
    </recommendedName>
    <alternativeName>
        <fullName evidence="1">Alpha-IPM synthase</fullName>
    </alternativeName>
    <alternativeName>
        <fullName evidence="1">Alpha-isopropylmalate synthase</fullName>
    </alternativeName>
</protein>